<reference key="1">
    <citation type="submission" date="2007-05" db="EMBL/GenBank/DDBJ databases">
        <title>Complete sequence of chromosome of Psychrobacter sp. PRwf-1.</title>
        <authorList>
            <consortium name="US DOE Joint Genome Institute"/>
            <person name="Copeland A."/>
            <person name="Lucas S."/>
            <person name="Lapidus A."/>
            <person name="Barry K."/>
            <person name="Detter J.C."/>
            <person name="Glavina del Rio T."/>
            <person name="Hammon N."/>
            <person name="Israni S."/>
            <person name="Dalin E."/>
            <person name="Tice H."/>
            <person name="Pitluck S."/>
            <person name="Chain P."/>
            <person name="Malfatti S."/>
            <person name="Shin M."/>
            <person name="Vergez L."/>
            <person name="Schmutz J."/>
            <person name="Larimer F."/>
            <person name="Land M."/>
            <person name="Hauser L."/>
            <person name="Kyrpides N."/>
            <person name="Kim E."/>
            <person name="Tiedje J."/>
            <person name="Richardson P."/>
        </authorList>
    </citation>
    <scope>NUCLEOTIDE SEQUENCE [LARGE SCALE GENOMIC DNA]</scope>
    <source>
        <strain>PRwf-1</strain>
    </source>
</reference>
<keyword id="KW-0963">Cytoplasm</keyword>
<keyword id="KW-0520">NAD</keyword>
<keyword id="KW-0560">Oxidoreductase</keyword>
<keyword id="KW-0664">Pyridoxine biosynthesis</keyword>
<gene>
    <name evidence="1" type="primary">pdxB</name>
    <name type="ordered locus">PsycPRwf_2208</name>
</gene>
<protein>
    <recommendedName>
        <fullName evidence="1">Erythronate-4-phosphate dehydrogenase</fullName>
        <ecNumber evidence="1">1.1.1.290</ecNumber>
    </recommendedName>
</protein>
<organism>
    <name type="scientific">Psychrobacter sp. (strain PRwf-1)</name>
    <dbReference type="NCBI Taxonomy" id="349106"/>
    <lineage>
        <taxon>Bacteria</taxon>
        <taxon>Pseudomonadati</taxon>
        <taxon>Pseudomonadota</taxon>
        <taxon>Gammaproteobacteria</taxon>
        <taxon>Moraxellales</taxon>
        <taxon>Moraxellaceae</taxon>
        <taxon>Psychrobacter</taxon>
    </lineage>
</organism>
<evidence type="ECO:0000255" key="1">
    <source>
        <dbReference type="HAMAP-Rule" id="MF_01825"/>
    </source>
</evidence>
<comment type="function">
    <text evidence="1">Catalyzes the oxidation of erythronate-4-phosphate to 3-hydroxy-2-oxo-4-phosphonooxybutanoate.</text>
</comment>
<comment type="catalytic activity">
    <reaction evidence="1">
        <text>4-phospho-D-erythronate + NAD(+) = (R)-3-hydroxy-2-oxo-4-phosphooxybutanoate + NADH + H(+)</text>
        <dbReference type="Rhea" id="RHEA:18829"/>
        <dbReference type="ChEBI" id="CHEBI:15378"/>
        <dbReference type="ChEBI" id="CHEBI:57540"/>
        <dbReference type="ChEBI" id="CHEBI:57945"/>
        <dbReference type="ChEBI" id="CHEBI:58538"/>
        <dbReference type="ChEBI" id="CHEBI:58766"/>
        <dbReference type="EC" id="1.1.1.290"/>
    </reaction>
</comment>
<comment type="pathway">
    <text evidence="1">Cofactor biosynthesis; pyridoxine 5'-phosphate biosynthesis; pyridoxine 5'-phosphate from D-erythrose 4-phosphate: step 2/5.</text>
</comment>
<comment type="subunit">
    <text evidence="1">Homodimer.</text>
</comment>
<comment type="subcellular location">
    <subcellularLocation>
        <location evidence="1">Cytoplasm</location>
    </subcellularLocation>
</comment>
<comment type="similarity">
    <text evidence="1">Belongs to the D-isomer specific 2-hydroxyacid dehydrogenase family. PdxB subfamily.</text>
</comment>
<dbReference type="EC" id="1.1.1.290" evidence="1"/>
<dbReference type="EMBL" id="CP000713">
    <property type="protein sequence ID" value="ABQ95148.1"/>
    <property type="molecule type" value="Genomic_DNA"/>
</dbReference>
<dbReference type="SMR" id="A5WHK7"/>
<dbReference type="STRING" id="349106.PsycPRwf_2208"/>
<dbReference type="KEGG" id="prw:PsycPRwf_2208"/>
<dbReference type="eggNOG" id="COG0111">
    <property type="taxonomic scope" value="Bacteria"/>
</dbReference>
<dbReference type="HOGENOM" id="CLU_019796_4_0_6"/>
<dbReference type="UniPathway" id="UPA00244">
    <property type="reaction ID" value="UER00310"/>
</dbReference>
<dbReference type="GO" id="GO:0005737">
    <property type="term" value="C:cytoplasm"/>
    <property type="evidence" value="ECO:0007669"/>
    <property type="project" value="UniProtKB-SubCell"/>
</dbReference>
<dbReference type="GO" id="GO:0033711">
    <property type="term" value="F:4-phosphoerythronate dehydrogenase activity"/>
    <property type="evidence" value="ECO:0007669"/>
    <property type="project" value="UniProtKB-EC"/>
</dbReference>
<dbReference type="GO" id="GO:0051287">
    <property type="term" value="F:NAD binding"/>
    <property type="evidence" value="ECO:0007669"/>
    <property type="project" value="InterPro"/>
</dbReference>
<dbReference type="GO" id="GO:0046983">
    <property type="term" value="F:protein dimerization activity"/>
    <property type="evidence" value="ECO:0007669"/>
    <property type="project" value="InterPro"/>
</dbReference>
<dbReference type="GO" id="GO:0008615">
    <property type="term" value="P:pyridoxine biosynthetic process"/>
    <property type="evidence" value="ECO:0007669"/>
    <property type="project" value="UniProtKB-UniRule"/>
</dbReference>
<dbReference type="CDD" id="cd12158">
    <property type="entry name" value="ErythrP_dh"/>
    <property type="match status" value="1"/>
</dbReference>
<dbReference type="Gene3D" id="3.30.1370.170">
    <property type="match status" value="1"/>
</dbReference>
<dbReference type="Gene3D" id="3.40.50.720">
    <property type="entry name" value="NAD(P)-binding Rossmann-like Domain"/>
    <property type="match status" value="2"/>
</dbReference>
<dbReference type="HAMAP" id="MF_01825">
    <property type="entry name" value="PdxB"/>
    <property type="match status" value="1"/>
</dbReference>
<dbReference type="InterPro" id="IPR050223">
    <property type="entry name" value="D-isomer_2-hydroxyacid_DH"/>
</dbReference>
<dbReference type="InterPro" id="IPR006139">
    <property type="entry name" value="D-isomer_2_OHA_DH_cat_dom"/>
</dbReference>
<dbReference type="InterPro" id="IPR029752">
    <property type="entry name" value="D-isomer_DH_CS1"/>
</dbReference>
<dbReference type="InterPro" id="IPR006140">
    <property type="entry name" value="D-isomer_DH_NAD-bd"/>
</dbReference>
<dbReference type="InterPro" id="IPR020921">
    <property type="entry name" value="Erythronate-4-P_DHase"/>
</dbReference>
<dbReference type="InterPro" id="IPR024531">
    <property type="entry name" value="Erythronate-4-P_DHase_dimer"/>
</dbReference>
<dbReference type="InterPro" id="IPR036291">
    <property type="entry name" value="NAD(P)-bd_dom_sf"/>
</dbReference>
<dbReference type="InterPro" id="IPR038251">
    <property type="entry name" value="PdxB_dimer_sf"/>
</dbReference>
<dbReference type="PANTHER" id="PTHR10996">
    <property type="entry name" value="2-HYDROXYACID DEHYDROGENASE-RELATED"/>
    <property type="match status" value="1"/>
</dbReference>
<dbReference type="Pfam" id="PF00389">
    <property type="entry name" value="2-Hacid_dh"/>
    <property type="match status" value="1"/>
</dbReference>
<dbReference type="Pfam" id="PF02826">
    <property type="entry name" value="2-Hacid_dh_C"/>
    <property type="match status" value="1"/>
</dbReference>
<dbReference type="Pfam" id="PF11890">
    <property type="entry name" value="DUF3410"/>
    <property type="match status" value="1"/>
</dbReference>
<dbReference type="SUPFAM" id="SSF52283">
    <property type="entry name" value="Formate/glycerate dehydrogenase catalytic domain-like"/>
    <property type="match status" value="1"/>
</dbReference>
<dbReference type="SUPFAM" id="SSF51735">
    <property type="entry name" value="NAD(P)-binding Rossmann-fold domains"/>
    <property type="match status" value="1"/>
</dbReference>
<dbReference type="PROSITE" id="PS00065">
    <property type="entry name" value="D_2_HYDROXYACID_DH_1"/>
    <property type="match status" value="1"/>
</dbReference>
<sequence>MLTIIADSNIAHLHDYFNEQTLNHPIQVISMAGRDITADALQQYQPDVLLIRSVTQIDAKLLDTNQSVKFIGSATIGTDHVNEGYVSLRGMRFVNAAGCSKHSVAQYVMSAILQLRPEYWASNTSQSDKPVKLGIIGLGNIGSTLARYALDLGWEVLGYDPFQSASVINNASVEKVLAQSDVISLHVPLTLTGHSELPTYHMIDADALAKMPSTTMLINTSRGAVVSEADLLADLNQNPERQVVLDVFENEPTVSAELLDKLTLATPHIAGYTLEGKLRGTQMIFDAFVRSYGEKGADILSIKETDLMADLLPDNPYQWQQLKANPQKLAEFYDIKADDRQLRDSVNEQAGAVLGTDFDALRKNYTLRREWLFD</sequence>
<accession>A5WHK7</accession>
<feature type="chain" id="PRO_1000088424" description="Erythronate-4-phosphate dehydrogenase">
    <location>
        <begin position="1"/>
        <end position="374"/>
    </location>
</feature>
<feature type="active site" evidence="1">
    <location>
        <position position="222"/>
    </location>
</feature>
<feature type="active site" evidence="1">
    <location>
        <position position="251"/>
    </location>
</feature>
<feature type="active site" description="Proton donor" evidence="1">
    <location>
        <position position="268"/>
    </location>
</feature>
<feature type="binding site" evidence="1">
    <location>
        <position position="53"/>
    </location>
    <ligand>
        <name>substrate</name>
    </ligand>
</feature>
<feature type="binding site" evidence="1">
    <location>
        <position position="75"/>
    </location>
    <ligand>
        <name>substrate</name>
    </ligand>
</feature>
<feature type="binding site" evidence="1">
    <location>
        <position position="160"/>
    </location>
    <ligand>
        <name>NAD(+)</name>
        <dbReference type="ChEBI" id="CHEBI:57540"/>
    </ligand>
</feature>
<feature type="binding site" evidence="1">
    <location>
        <position position="246"/>
    </location>
    <ligand>
        <name>NAD(+)</name>
        <dbReference type="ChEBI" id="CHEBI:57540"/>
    </ligand>
</feature>
<feature type="binding site" evidence="1">
    <location>
        <position position="271"/>
    </location>
    <ligand>
        <name>NAD(+)</name>
        <dbReference type="ChEBI" id="CHEBI:57540"/>
    </ligand>
</feature>
<feature type="binding site" evidence="1">
    <location>
        <position position="272"/>
    </location>
    <ligand>
        <name>substrate</name>
    </ligand>
</feature>
<name>PDXB_PSYWF</name>
<proteinExistence type="inferred from homology"/>